<proteinExistence type="inferred from homology"/>
<dbReference type="EC" id="7.1.1.2"/>
<dbReference type="EMBL" id="J04815">
    <property type="protein sequence ID" value="AAA68143.1"/>
    <property type="molecule type" value="Genomic_DNA"/>
</dbReference>
<dbReference type="PIR" id="B34285">
    <property type="entry name" value="B34285"/>
</dbReference>
<dbReference type="RefSeq" id="NP_008131.1">
    <property type="nucleotide sequence ID" value="NC_001572.1"/>
</dbReference>
<dbReference type="SMR" id="P12776"/>
<dbReference type="GeneID" id="807710"/>
<dbReference type="CTD" id="4540"/>
<dbReference type="GO" id="GO:0005743">
    <property type="term" value="C:mitochondrial inner membrane"/>
    <property type="evidence" value="ECO:0007669"/>
    <property type="project" value="UniProtKB-SubCell"/>
</dbReference>
<dbReference type="GO" id="GO:0008137">
    <property type="term" value="F:NADH dehydrogenase (ubiquinone) activity"/>
    <property type="evidence" value="ECO:0007669"/>
    <property type="project" value="UniProtKB-EC"/>
</dbReference>
<dbReference type="GO" id="GO:0042773">
    <property type="term" value="P:ATP synthesis coupled electron transport"/>
    <property type="evidence" value="ECO:0007669"/>
    <property type="project" value="InterPro"/>
</dbReference>
<dbReference type="GO" id="GO:0015990">
    <property type="term" value="P:electron transport coupled proton transport"/>
    <property type="evidence" value="ECO:0007669"/>
    <property type="project" value="TreeGrafter"/>
</dbReference>
<dbReference type="InterPro" id="IPR010934">
    <property type="entry name" value="NADH_DH_su5_C"/>
</dbReference>
<dbReference type="InterPro" id="IPR018393">
    <property type="entry name" value="NADHpl_OxRdtase_5_subgr"/>
</dbReference>
<dbReference type="InterPro" id="IPR001750">
    <property type="entry name" value="ND/Mrp_TM"/>
</dbReference>
<dbReference type="InterPro" id="IPR003945">
    <property type="entry name" value="NU5C-like"/>
</dbReference>
<dbReference type="InterPro" id="IPR001516">
    <property type="entry name" value="Proton_antipo_N"/>
</dbReference>
<dbReference type="NCBIfam" id="TIGR01974">
    <property type="entry name" value="NDH_I_L"/>
    <property type="match status" value="1"/>
</dbReference>
<dbReference type="PANTHER" id="PTHR42829">
    <property type="entry name" value="NADH-UBIQUINONE OXIDOREDUCTASE CHAIN 5"/>
    <property type="match status" value="1"/>
</dbReference>
<dbReference type="PANTHER" id="PTHR42829:SF2">
    <property type="entry name" value="NADH-UBIQUINONE OXIDOREDUCTASE CHAIN 5"/>
    <property type="match status" value="1"/>
</dbReference>
<dbReference type="Pfam" id="PF06455">
    <property type="entry name" value="NADH5_C"/>
    <property type="match status" value="1"/>
</dbReference>
<dbReference type="Pfam" id="PF00361">
    <property type="entry name" value="Proton_antipo_M"/>
    <property type="match status" value="1"/>
</dbReference>
<dbReference type="Pfam" id="PF00662">
    <property type="entry name" value="Proton_antipo_N"/>
    <property type="match status" value="1"/>
</dbReference>
<dbReference type="PRINTS" id="PR01434">
    <property type="entry name" value="NADHDHGNASE5"/>
</dbReference>
<feature type="chain" id="PRO_0000118125" description="NADH-ubiquinone oxidoreductase chain 5">
    <location>
        <begin position="1"/>
        <end position="638"/>
    </location>
</feature>
<feature type="transmembrane region" description="Helical" evidence="2">
    <location>
        <begin position="7"/>
        <end position="27"/>
    </location>
</feature>
<feature type="transmembrane region" description="Helical" evidence="2">
    <location>
        <begin position="66"/>
        <end position="86"/>
    </location>
</feature>
<feature type="transmembrane region" description="Helical" evidence="2">
    <location>
        <begin position="112"/>
        <end position="132"/>
    </location>
</feature>
<feature type="transmembrane region" description="Helical" evidence="2">
    <location>
        <begin position="169"/>
        <end position="189"/>
    </location>
</feature>
<feature type="transmembrane region" description="Helical" evidence="2">
    <location>
        <begin position="203"/>
        <end position="223"/>
    </location>
</feature>
<feature type="transmembrane region" description="Helical" evidence="2">
    <location>
        <begin position="242"/>
        <end position="262"/>
    </location>
</feature>
<feature type="transmembrane region" description="Helical" evidence="2">
    <location>
        <begin position="275"/>
        <end position="295"/>
    </location>
</feature>
<feature type="transmembrane region" description="Helical" evidence="2">
    <location>
        <begin position="307"/>
        <end position="327"/>
    </location>
</feature>
<feature type="transmembrane region" description="Helical" evidence="2">
    <location>
        <begin position="335"/>
        <end position="354"/>
    </location>
</feature>
<feature type="transmembrane region" description="Helical" evidence="2">
    <location>
        <begin position="365"/>
        <end position="385"/>
    </location>
</feature>
<feature type="transmembrane region" description="Helical" evidence="2">
    <location>
        <begin position="404"/>
        <end position="424"/>
    </location>
</feature>
<feature type="transmembrane region" description="Helical" evidence="2">
    <location>
        <begin position="445"/>
        <end position="465"/>
    </location>
</feature>
<feature type="transmembrane region" description="Helical" evidence="2">
    <location>
        <begin position="487"/>
        <end position="507"/>
    </location>
</feature>
<feature type="transmembrane region" description="Helical" evidence="2">
    <location>
        <begin position="520"/>
        <end position="540"/>
    </location>
</feature>
<feature type="transmembrane region" description="Helical" evidence="2">
    <location>
        <begin position="618"/>
        <end position="638"/>
    </location>
</feature>
<geneLocation type="mitochondrion"/>
<evidence type="ECO:0000250" key="1"/>
<evidence type="ECO:0000255" key="2"/>
<evidence type="ECO:0000305" key="3"/>
<accession>P12776</accession>
<reference key="1">
    <citation type="journal article" date="1989" name="J. Biol. Chem.">
        <title>The complete nucleotide sequence, gene organization, and genetic code of the mitochondrial genome of Paracentrotus lividus.</title>
        <authorList>
            <person name="Cantatore P."/>
            <person name="Roberti M."/>
            <person name="Rainaldi G."/>
            <person name="Gadaleta M.N."/>
            <person name="Saccone C."/>
        </authorList>
    </citation>
    <scope>NUCLEOTIDE SEQUENCE [GENOMIC DNA]</scope>
</reference>
<sequence>MVINPSTIVSTLSMSIMAILAVSIFFFSKSYFYPPQNNNLVSFRVSNDTLSNNPNGSSLDYNSGPFAISVLKTLAFLSVISLLISVQNSFKSINLTFSLWFNNTPTNVSINFLLDQYFLLFLSVGLIVTWSIMEFSYYYMKEDPNGKAFFRPFGHFSLNMLILTSSNSLFLVFLGWEGVGFLSFLLISWWATRNDASSSALEAVIYNRIGDIGLITFMSLAVLTTNSWNLTEIITNEPNNHFVLFMLFGLILAAAGKSAQFGLHPWLPAAMEGPTPVSALLHSSTMVVAGVFLLVRTSELFSNYPNANTIVLVLGGTTALFAASTAIAQHDIKKIIAYSTTSQLGLMVAAIGIGQPVLAFFHICTHAFFKAMLFLCLGSVIHSLNNERNLRKMEGISDLSPVTSACLAMGSLALMGTPFLAGFYSKDLILEAASASFANTLGISLGIVATMLTTVYSFRIVFFCFSSNNSISPLSPIGEENSNLINALLRLSIGTILSGWFFSNFIFSPPSFTVTPEEKGLPLLVTVVGLTVIFISLSYLSSNPIKSTSHSTTTSQWFFVDIVHSALTTTSFISSSFSSSRTLDRGWQENIGAQGIAQSSTALSKANQASQIGLIKRYIASSIAAITIIATLTFIVLS</sequence>
<name>NU5M_PARLI</name>
<keyword id="KW-0249">Electron transport</keyword>
<keyword id="KW-0472">Membrane</keyword>
<keyword id="KW-0496">Mitochondrion</keyword>
<keyword id="KW-0999">Mitochondrion inner membrane</keyword>
<keyword id="KW-0520">NAD</keyword>
<keyword id="KW-0679">Respiratory chain</keyword>
<keyword id="KW-1278">Translocase</keyword>
<keyword id="KW-0812">Transmembrane</keyword>
<keyword id="KW-1133">Transmembrane helix</keyword>
<keyword id="KW-0813">Transport</keyword>
<keyword id="KW-0830">Ubiquinone</keyword>
<organism>
    <name type="scientific">Paracentrotus lividus</name>
    <name type="common">Common sea urchin</name>
    <dbReference type="NCBI Taxonomy" id="7656"/>
    <lineage>
        <taxon>Eukaryota</taxon>
        <taxon>Metazoa</taxon>
        <taxon>Echinodermata</taxon>
        <taxon>Eleutherozoa</taxon>
        <taxon>Echinozoa</taxon>
        <taxon>Echinoidea</taxon>
        <taxon>Euechinoidea</taxon>
        <taxon>Echinacea</taxon>
        <taxon>Camarodonta</taxon>
        <taxon>Echinidea</taxon>
        <taxon>Echinidae</taxon>
        <taxon>Paracentrotus</taxon>
    </lineage>
</organism>
<comment type="function">
    <text evidence="1">Core subunit of the mitochondrial membrane respiratory chain NADH dehydrogenase (Complex I) that is believed to belong to the minimal assembly required for catalysis. Complex I functions in the transfer of electrons from NADH to the respiratory chain. The immediate electron acceptor for the enzyme is believed to be ubiquinone (By similarity).</text>
</comment>
<comment type="catalytic activity">
    <reaction>
        <text>a ubiquinone + NADH + 5 H(+)(in) = a ubiquinol + NAD(+) + 4 H(+)(out)</text>
        <dbReference type="Rhea" id="RHEA:29091"/>
        <dbReference type="Rhea" id="RHEA-COMP:9565"/>
        <dbReference type="Rhea" id="RHEA-COMP:9566"/>
        <dbReference type="ChEBI" id="CHEBI:15378"/>
        <dbReference type="ChEBI" id="CHEBI:16389"/>
        <dbReference type="ChEBI" id="CHEBI:17976"/>
        <dbReference type="ChEBI" id="CHEBI:57540"/>
        <dbReference type="ChEBI" id="CHEBI:57945"/>
        <dbReference type="EC" id="7.1.1.2"/>
    </reaction>
</comment>
<comment type="subcellular location">
    <subcellularLocation>
        <location evidence="1">Mitochondrion inner membrane</location>
        <topology evidence="1">Multi-pass membrane protein</topology>
    </subcellularLocation>
</comment>
<comment type="similarity">
    <text evidence="3">Belongs to the complex I subunit 5 family.</text>
</comment>
<gene>
    <name type="primary">ND5</name>
</gene>
<protein>
    <recommendedName>
        <fullName>NADH-ubiquinone oxidoreductase chain 5</fullName>
        <ecNumber>7.1.1.2</ecNumber>
    </recommendedName>
    <alternativeName>
        <fullName>NADH dehydrogenase subunit 5</fullName>
    </alternativeName>
</protein>